<accession>D4GWT7</accession>
<dbReference type="EC" id="2.7.4.26"/>
<dbReference type="EMBL" id="CP001956">
    <property type="protein sequence ID" value="ADE04091.1"/>
    <property type="molecule type" value="Genomic_DNA"/>
</dbReference>
<dbReference type="EMBL" id="AOHU01000047">
    <property type="protein sequence ID" value="ELY32354.1"/>
    <property type="molecule type" value="Genomic_DNA"/>
</dbReference>
<dbReference type="RefSeq" id="WP_004043009.1">
    <property type="nucleotide sequence ID" value="NC_013967.1"/>
</dbReference>
<dbReference type="SMR" id="D4GWT7"/>
<dbReference type="STRING" id="309800.HVO_2762"/>
<dbReference type="PaxDb" id="309800-C498_09099"/>
<dbReference type="EnsemblBacteria" id="ADE04091">
    <property type="protein sequence ID" value="ADE04091"/>
    <property type="gene ID" value="HVO_2762"/>
</dbReference>
<dbReference type="GeneID" id="8924706"/>
<dbReference type="KEGG" id="hvo:HVO_2762"/>
<dbReference type="PATRIC" id="fig|309800.29.peg.1783"/>
<dbReference type="eggNOG" id="arCOG00860">
    <property type="taxonomic scope" value="Archaea"/>
</dbReference>
<dbReference type="HOGENOM" id="CLU_070213_0_0_2"/>
<dbReference type="OrthoDB" id="15328at2157"/>
<dbReference type="BioCyc" id="MetaCyc:MONOMER-21129"/>
<dbReference type="BRENDA" id="2.7.4.26">
    <property type="organism ID" value="2561"/>
</dbReference>
<dbReference type="Proteomes" id="UP000008243">
    <property type="component" value="Chromosome"/>
</dbReference>
<dbReference type="Proteomes" id="UP000011532">
    <property type="component" value="Unassembled WGS sequence"/>
</dbReference>
<dbReference type="GO" id="GO:0005829">
    <property type="term" value="C:cytosol"/>
    <property type="evidence" value="ECO:0007669"/>
    <property type="project" value="TreeGrafter"/>
</dbReference>
<dbReference type="GO" id="GO:0005524">
    <property type="term" value="F:ATP binding"/>
    <property type="evidence" value="ECO:0007669"/>
    <property type="project" value="UniProtKB-KW"/>
</dbReference>
<dbReference type="GO" id="GO:0102043">
    <property type="term" value="F:isopentenyl phosphate kinase activity"/>
    <property type="evidence" value="ECO:0007669"/>
    <property type="project" value="UniProtKB-EC"/>
</dbReference>
<dbReference type="GO" id="GO:0016301">
    <property type="term" value="F:kinase activity"/>
    <property type="evidence" value="ECO:0007669"/>
    <property type="project" value="UniProtKB-KW"/>
</dbReference>
<dbReference type="GO" id="GO:0016114">
    <property type="term" value="P:terpenoid biosynthetic process"/>
    <property type="evidence" value="ECO:0007669"/>
    <property type="project" value="TreeGrafter"/>
</dbReference>
<dbReference type="CDD" id="cd04241">
    <property type="entry name" value="AAK_FomA-like"/>
    <property type="match status" value="1"/>
</dbReference>
<dbReference type="Gene3D" id="3.40.1160.10">
    <property type="entry name" value="Acetylglutamate kinase-like"/>
    <property type="match status" value="1"/>
</dbReference>
<dbReference type="InterPro" id="IPR036393">
    <property type="entry name" value="AceGlu_kinase-like_sf"/>
</dbReference>
<dbReference type="InterPro" id="IPR001048">
    <property type="entry name" value="Asp/Glu/Uridylate_kinase"/>
</dbReference>
<dbReference type="InterPro" id="IPR024192">
    <property type="entry name" value="Fosfomycin_R_FomA-type"/>
</dbReference>
<dbReference type="NCBIfam" id="NF040647">
    <property type="entry name" value="IPPK_Arch"/>
    <property type="match status" value="1"/>
</dbReference>
<dbReference type="PANTHER" id="PTHR43654">
    <property type="entry name" value="GLUTAMATE 5-KINASE"/>
    <property type="match status" value="1"/>
</dbReference>
<dbReference type="PANTHER" id="PTHR43654:SF1">
    <property type="entry name" value="ISOPENTENYL PHOSPHATE KINASE"/>
    <property type="match status" value="1"/>
</dbReference>
<dbReference type="Pfam" id="PF00696">
    <property type="entry name" value="AA_kinase"/>
    <property type="match status" value="1"/>
</dbReference>
<dbReference type="PIRSF" id="PIRSF016496">
    <property type="entry name" value="Kin_FomA"/>
    <property type="match status" value="1"/>
</dbReference>
<dbReference type="SUPFAM" id="SSF53633">
    <property type="entry name" value="Carbamate kinase-like"/>
    <property type="match status" value="1"/>
</dbReference>
<proteinExistence type="evidence at protein level"/>
<organism>
    <name type="scientific">Haloferax volcanii (strain ATCC 29605 / DSM 3757 / JCM 8879 / NBRC 14742 / NCIMB 2012 / VKM B-1768 / DS2)</name>
    <name type="common">Halobacterium volcanii</name>
    <dbReference type="NCBI Taxonomy" id="309800"/>
    <lineage>
        <taxon>Archaea</taxon>
        <taxon>Methanobacteriati</taxon>
        <taxon>Methanobacteriota</taxon>
        <taxon>Stenosarchaea group</taxon>
        <taxon>Halobacteria</taxon>
        <taxon>Halobacteriales</taxon>
        <taxon>Haloferacaceae</taxon>
        <taxon>Haloferax</taxon>
    </lineage>
</organism>
<feature type="chain" id="PRO_0000429254" description="Isopentenyl phosphate kinase">
    <location>
        <begin position="1"/>
        <end position="248"/>
    </location>
</feature>
<feature type="binding site" evidence="1">
    <location>
        <begin position="7"/>
        <end position="11"/>
    </location>
    <ligand>
        <name>ATP</name>
        <dbReference type="ChEBI" id="CHEBI:30616"/>
    </ligand>
</feature>
<feature type="binding site" evidence="1">
    <location>
        <position position="49"/>
    </location>
    <ligand>
        <name>substrate</name>
    </ligand>
</feature>
<feature type="binding site" evidence="1">
    <location>
        <position position="50"/>
    </location>
    <ligand>
        <name>ATP</name>
        <dbReference type="ChEBI" id="CHEBI:30616"/>
    </ligand>
</feature>
<feature type="binding site" evidence="1">
    <location>
        <position position="54"/>
    </location>
    <ligand>
        <name>substrate</name>
    </ligand>
</feature>
<feature type="binding site" evidence="1">
    <location>
        <position position="152"/>
    </location>
    <ligand>
        <name>substrate</name>
    </ligand>
</feature>
<feature type="binding site" evidence="1">
    <location>
        <position position="209"/>
    </location>
    <ligand>
        <name>ATP</name>
        <dbReference type="ChEBI" id="CHEBI:30616"/>
    </ligand>
</feature>
<feature type="binding site" evidence="1">
    <location>
        <position position="213"/>
    </location>
    <ligand>
        <name>ATP</name>
        <dbReference type="ChEBI" id="CHEBI:30616"/>
    </ligand>
</feature>
<feature type="site" description="Transition state stabilizer" evidence="1">
    <location>
        <position position="16"/>
    </location>
</feature>
<name>IPK_HALVD</name>
<reference key="1">
    <citation type="journal article" date="2010" name="PLoS ONE">
        <title>The complete genome sequence of Haloferax volcanii DS2, a model archaeon.</title>
        <authorList>
            <person name="Hartman A.L."/>
            <person name="Norais C."/>
            <person name="Badger J.H."/>
            <person name="Delmas S."/>
            <person name="Haldenby S."/>
            <person name="Madupu R."/>
            <person name="Robinson J."/>
            <person name="Khouri H."/>
            <person name="Ren Q."/>
            <person name="Lowe T.M."/>
            <person name="Maupin-Furlow J."/>
            <person name="Pohlschroder M."/>
            <person name="Daniels C."/>
            <person name="Pfeiffer F."/>
            <person name="Allers T."/>
            <person name="Eisen J.A."/>
        </authorList>
    </citation>
    <scope>NUCLEOTIDE SEQUENCE [LARGE SCALE GENOMIC DNA]</scope>
    <source>
        <strain>ATCC 29605 / DSM 3757 / JCM 8879 / NBRC 14742 / NCIMB 2012 / VKM B-1768 / DS2</strain>
    </source>
</reference>
<reference key="2">
    <citation type="journal article" date="2014" name="PLoS Genet.">
        <title>Phylogenetically driven sequencing of extremely halophilic archaea reveals strategies for static and dynamic osmo-response.</title>
        <authorList>
            <person name="Becker E.A."/>
            <person name="Seitzer P.M."/>
            <person name="Tritt A."/>
            <person name="Larsen D."/>
            <person name="Krusor M."/>
            <person name="Yao A.I."/>
            <person name="Wu D."/>
            <person name="Madern D."/>
            <person name="Eisen J.A."/>
            <person name="Darling A.E."/>
            <person name="Facciotti M.T."/>
        </authorList>
    </citation>
    <scope>NUCLEOTIDE SEQUENCE [LARGE SCALE GENOMIC DNA]</scope>
    <source>
        <strain>ATCC 29605 / DSM 3757 / JCM 8879 / NBRC 14742 / NCIMB 2012 / VKM B-1768 / DS2</strain>
    </source>
</reference>
<reference key="3">
    <citation type="journal article" date="2014" name="J. Bacteriol.">
        <title>Identification in Haloferax volcanii of phosphomevalonate decarboxylase and isopentenyl phosphate kinase as catalysts of the terminal enzyme reactions in an archaeal alternate mevalonate pathway.</title>
        <authorList>
            <person name="Vannice J.C."/>
            <person name="Skaff D.A."/>
            <person name="Keightley A."/>
            <person name="Addo J.K."/>
            <person name="Wyckoff G.J."/>
            <person name="Miziorko H.M."/>
        </authorList>
    </citation>
    <scope>IDENTIFICATION</scope>
    <scope>FUNCTION</scope>
    <scope>CATALYTIC ACTIVITY</scope>
    <scope>KINETIC PARAMETERS</scope>
    <scope>PATHWAY</scope>
    <source>
        <strain>DS2 / DS70</strain>
    </source>
</reference>
<sequence length="248" mass="24647">MSLVVLKLGGSVVTDKDEPETVDEAGLAAAADAVAPLAESRRVVVVHGGGSFGHHHAAEHGVSSESGSHDARGVRAIHDAMKRLNDAVLDALEERGVAALPVHPLSAGAREADGSLSLPLAATETMLDEGFVPVLHGDVISHAGKGATIVSGDDLVVSLASGLGADRVGLCSTVPGVLDADGDVIPEITAFADAADALGGSDSTDVTGGMAAKVRKLLALGAPAHVFGPEGLSAFVAGESPGTVIRGE</sequence>
<evidence type="ECO:0000250" key="1"/>
<evidence type="ECO:0000269" key="2">
    <source>
    </source>
</evidence>
<evidence type="ECO:0000305" key="3"/>
<keyword id="KW-0067">ATP-binding</keyword>
<keyword id="KW-0414">Isoprene biosynthesis</keyword>
<keyword id="KW-0418">Kinase</keyword>
<keyword id="KW-0444">Lipid biosynthesis</keyword>
<keyword id="KW-0443">Lipid metabolism</keyword>
<keyword id="KW-0547">Nucleotide-binding</keyword>
<keyword id="KW-1185">Reference proteome</keyword>
<keyword id="KW-0808">Transferase</keyword>
<comment type="function">
    <text evidence="2">Catalyzes the phosphorylation of isopentenyl phosphate (IP) to isopentenyl diphosphate (IPP). Functions in an alternate mevalonate (MVA) pathway leading to IPP, a key precursor for the biosynthesis of isoprenoid compounds such as archaeal membrane lipids.</text>
</comment>
<comment type="catalytic activity">
    <reaction evidence="2">
        <text>isopentenyl phosphate + ATP = isopentenyl diphosphate + ADP</text>
        <dbReference type="Rhea" id="RHEA:33963"/>
        <dbReference type="ChEBI" id="CHEBI:30616"/>
        <dbReference type="ChEBI" id="CHEBI:65078"/>
        <dbReference type="ChEBI" id="CHEBI:128769"/>
        <dbReference type="ChEBI" id="CHEBI:456216"/>
        <dbReference type="EC" id="2.7.4.26"/>
    </reaction>
</comment>
<comment type="biophysicochemical properties">
    <kinetics>
        <KM evidence="2">77 uM for isopentenyl phosphate</KM>
        <KM evidence="2">290 uM for ATP</KM>
        <Vmax evidence="2">37.0 umol/min/mg enzyme</Vmax>
        <text>kcat is 16.3 sec(-1).</text>
    </kinetics>
</comment>
<comment type="subunit">
    <text evidence="1">Homodimer.</text>
</comment>
<comment type="similarity">
    <text evidence="3">Belongs to the isopentenyl phosphate kinase family.</text>
</comment>
<gene>
    <name type="ordered locus">HVO_2762</name>
    <name type="ORF">C498_09099</name>
</gene>
<protein>
    <recommendedName>
        <fullName>Isopentenyl phosphate kinase</fullName>
        <shortName>IPK</shortName>
        <ecNumber>2.7.4.26</ecNumber>
    </recommendedName>
</protein>